<proteinExistence type="inferred from homology"/>
<evidence type="ECO:0000255" key="1">
    <source>
        <dbReference type="HAMAP-Rule" id="MF_01522"/>
    </source>
</evidence>
<sequence length="632" mass="69150">MSEESHPNERHMTPRKLFYLALGSVGVVYGDIGTSPLYAFREALKPVAHDGVTRFEVISLISLMIWALTIIVTIKYVLFLLRADNDGEGGTLSLLALLMKTANGHTAILMLLGLMGAALFLGDAMITPALSVLSAVEGLKLVTPRLADYIVPISVVILALLFVVQSRGTGAVAKFFGPITAVWFLVMAAAGISHISDDYGILAAFNPYYAVAFLLHEGFYGIVVLGAVFLTVTGAEALYADLGHFGRRPIQWAWFLLVFPALTLNYLGQGALVLGNPMTMSDPFYLMYPKWALLPVVILATAATIIASQAVITGAFSMVRQGINLGFLPRMEILFTSETNTGQIFVPSVNAVLFIGVIFLVLGFKTSDALATAYGISVTGAMVVTSIMAFEFVRARWNWSLPVAVIALAPLVVLEMIFLGANLLKIHDGGYIPIMIATAFTVVMWTWRRGTAILMEKTRHTDIPLASFVSSIERKSEHSPAQVPGTAIFLTSDPESAPAALLHNLKHNHVLHDRNVILTIRTINKPRVPSHDRYRVEQISERFSRVELLFGFMESQNVSQALATLRKTGLKFDIMSTSFYLGRRKLVPDAKSGMPHWQDRLYIALANAAANPSDYFRLPANRVVELGSHVII</sequence>
<dbReference type="EMBL" id="AM236080">
    <property type="protein sequence ID" value="CAK06419.1"/>
    <property type="molecule type" value="Genomic_DNA"/>
</dbReference>
<dbReference type="RefSeq" id="WP_011650664.1">
    <property type="nucleotide sequence ID" value="NC_008380.1"/>
</dbReference>
<dbReference type="EnsemblBacteria" id="CAK06419">
    <property type="protein sequence ID" value="CAK06419"/>
    <property type="gene ID" value="RL0922"/>
</dbReference>
<dbReference type="KEGG" id="rle:RL0922"/>
<dbReference type="eggNOG" id="COG3158">
    <property type="taxonomic scope" value="Bacteria"/>
</dbReference>
<dbReference type="HOGENOM" id="CLU_008142_4_2_5"/>
<dbReference type="Proteomes" id="UP000006575">
    <property type="component" value="Chromosome"/>
</dbReference>
<dbReference type="GO" id="GO:0005886">
    <property type="term" value="C:plasma membrane"/>
    <property type="evidence" value="ECO:0007669"/>
    <property type="project" value="UniProtKB-SubCell"/>
</dbReference>
<dbReference type="GO" id="GO:0015079">
    <property type="term" value="F:potassium ion transmembrane transporter activity"/>
    <property type="evidence" value="ECO:0007669"/>
    <property type="project" value="UniProtKB-UniRule"/>
</dbReference>
<dbReference type="GO" id="GO:0015293">
    <property type="term" value="F:symporter activity"/>
    <property type="evidence" value="ECO:0007669"/>
    <property type="project" value="UniProtKB-UniRule"/>
</dbReference>
<dbReference type="HAMAP" id="MF_01522">
    <property type="entry name" value="Kup"/>
    <property type="match status" value="1"/>
</dbReference>
<dbReference type="InterPro" id="IPR003855">
    <property type="entry name" value="K+_transporter"/>
</dbReference>
<dbReference type="InterPro" id="IPR053952">
    <property type="entry name" value="K_trans_C"/>
</dbReference>
<dbReference type="InterPro" id="IPR053951">
    <property type="entry name" value="K_trans_N"/>
</dbReference>
<dbReference type="InterPro" id="IPR023051">
    <property type="entry name" value="Kup"/>
</dbReference>
<dbReference type="PANTHER" id="PTHR30540:SF79">
    <property type="entry name" value="LOW AFFINITY POTASSIUM TRANSPORT SYSTEM PROTEIN KUP"/>
    <property type="match status" value="1"/>
</dbReference>
<dbReference type="PANTHER" id="PTHR30540">
    <property type="entry name" value="OSMOTIC STRESS POTASSIUM TRANSPORTER"/>
    <property type="match status" value="1"/>
</dbReference>
<dbReference type="Pfam" id="PF02705">
    <property type="entry name" value="K_trans"/>
    <property type="match status" value="1"/>
</dbReference>
<dbReference type="Pfam" id="PF22776">
    <property type="entry name" value="K_trans_C"/>
    <property type="match status" value="1"/>
</dbReference>
<reference key="1">
    <citation type="journal article" date="2006" name="Genome Biol.">
        <title>The genome of Rhizobium leguminosarum has recognizable core and accessory components.</title>
        <authorList>
            <person name="Young J.P.W."/>
            <person name="Crossman L.C."/>
            <person name="Johnston A.W.B."/>
            <person name="Thomson N.R."/>
            <person name="Ghazoui Z.F."/>
            <person name="Hull K.H."/>
            <person name="Wexler M."/>
            <person name="Curson A.R.J."/>
            <person name="Todd J.D."/>
            <person name="Poole P.S."/>
            <person name="Mauchline T.H."/>
            <person name="East A.K."/>
            <person name="Quail M.A."/>
            <person name="Churcher C."/>
            <person name="Arrowsmith C."/>
            <person name="Cherevach I."/>
            <person name="Chillingworth T."/>
            <person name="Clarke K."/>
            <person name="Cronin A."/>
            <person name="Davis P."/>
            <person name="Fraser A."/>
            <person name="Hance Z."/>
            <person name="Hauser H."/>
            <person name="Jagels K."/>
            <person name="Moule S."/>
            <person name="Mungall K."/>
            <person name="Norbertczak H."/>
            <person name="Rabbinowitsch E."/>
            <person name="Sanders M."/>
            <person name="Simmonds M."/>
            <person name="Whitehead S."/>
            <person name="Parkhill J."/>
        </authorList>
    </citation>
    <scope>NUCLEOTIDE SEQUENCE [LARGE SCALE GENOMIC DNA]</scope>
    <source>
        <strain>DSM 114642 / LMG 32736 / 3841</strain>
    </source>
</reference>
<comment type="function">
    <text evidence="1">Transport of potassium into the cell. Likely operates as a K(+):H(+) symporter.</text>
</comment>
<comment type="catalytic activity">
    <reaction evidence="1">
        <text>K(+)(in) + H(+)(in) = K(+)(out) + H(+)(out)</text>
        <dbReference type="Rhea" id="RHEA:28490"/>
        <dbReference type="ChEBI" id="CHEBI:15378"/>
        <dbReference type="ChEBI" id="CHEBI:29103"/>
    </reaction>
    <physiologicalReaction direction="right-to-left" evidence="1">
        <dbReference type="Rhea" id="RHEA:28492"/>
    </physiologicalReaction>
</comment>
<comment type="subcellular location">
    <subcellularLocation>
        <location evidence="1">Cell inner membrane</location>
        <topology evidence="1">Multi-pass membrane protein</topology>
    </subcellularLocation>
</comment>
<comment type="similarity">
    <text evidence="1">Belongs to the HAK/KUP transporter (TC 2.A.72) family.</text>
</comment>
<protein>
    <recommendedName>
        <fullName evidence="1">Probable potassium transport system protein Kup 1</fullName>
    </recommendedName>
</protein>
<keyword id="KW-0997">Cell inner membrane</keyword>
<keyword id="KW-1003">Cell membrane</keyword>
<keyword id="KW-0406">Ion transport</keyword>
<keyword id="KW-0472">Membrane</keyword>
<keyword id="KW-0630">Potassium</keyword>
<keyword id="KW-0633">Potassium transport</keyword>
<keyword id="KW-0769">Symport</keyword>
<keyword id="KW-0812">Transmembrane</keyword>
<keyword id="KW-1133">Transmembrane helix</keyword>
<keyword id="KW-0813">Transport</keyword>
<accession>Q1MKT5</accession>
<feature type="chain" id="PRO_0000279821" description="Probable potassium transport system protein Kup 1">
    <location>
        <begin position="1"/>
        <end position="632"/>
    </location>
</feature>
<feature type="transmembrane region" description="Helical" evidence="1">
    <location>
        <begin position="17"/>
        <end position="37"/>
    </location>
</feature>
<feature type="transmembrane region" description="Helical" evidence="1">
    <location>
        <begin position="60"/>
        <end position="80"/>
    </location>
</feature>
<feature type="transmembrane region" description="Helical" evidence="1">
    <location>
        <begin position="106"/>
        <end position="126"/>
    </location>
</feature>
<feature type="transmembrane region" description="Helical" evidence="1">
    <location>
        <begin position="146"/>
        <end position="166"/>
    </location>
</feature>
<feature type="transmembrane region" description="Helical" evidence="1">
    <location>
        <begin position="175"/>
        <end position="195"/>
    </location>
</feature>
<feature type="transmembrane region" description="Helical" evidence="1">
    <location>
        <begin position="210"/>
        <end position="230"/>
    </location>
</feature>
<feature type="transmembrane region" description="Helical" evidence="1">
    <location>
        <begin position="254"/>
        <end position="274"/>
    </location>
</feature>
<feature type="transmembrane region" description="Helical" evidence="1">
    <location>
        <begin position="292"/>
        <end position="312"/>
    </location>
</feature>
<feature type="transmembrane region" description="Helical" evidence="1">
    <location>
        <begin position="344"/>
        <end position="364"/>
    </location>
</feature>
<feature type="transmembrane region" description="Helical" evidence="1">
    <location>
        <begin position="370"/>
        <end position="390"/>
    </location>
</feature>
<feature type="transmembrane region" description="Helical" evidence="1">
    <location>
        <begin position="401"/>
        <end position="421"/>
    </location>
</feature>
<feature type="transmembrane region" description="Helical" evidence="1">
    <location>
        <begin position="426"/>
        <end position="446"/>
    </location>
</feature>
<name>KUP1_RHIJ3</name>
<gene>
    <name evidence="1" type="primary">kup1</name>
    <name type="ordered locus">RL0922</name>
</gene>
<organism>
    <name type="scientific">Rhizobium johnstonii (strain DSM 114642 / LMG 32736 / 3841)</name>
    <name type="common">Rhizobium leguminosarum bv. viciae</name>
    <dbReference type="NCBI Taxonomy" id="216596"/>
    <lineage>
        <taxon>Bacteria</taxon>
        <taxon>Pseudomonadati</taxon>
        <taxon>Pseudomonadota</taxon>
        <taxon>Alphaproteobacteria</taxon>
        <taxon>Hyphomicrobiales</taxon>
        <taxon>Rhizobiaceae</taxon>
        <taxon>Rhizobium/Agrobacterium group</taxon>
        <taxon>Rhizobium</taxon>
        <taxon>Rhizobium johnstonii</taxon>
    </lineage>
</organism>